<feature type="chain" id="PRO_0000214680" description="Probable 2-(5''-triphosphoribosyl)-3'-dephosphocoenzyme-A synthase">
    <location>
        <begin position="1"/>
        <end position="294"/>
    </location>
</feature>
<evidence type="ECO:0000255" key="1">
    <source>
        <dbReference type="HAMAP-Rule" id="MF_00397"/>
    </source>
</evidence>
<protein>
    <recommendedName>
        <fullName evidence="1">Probable 2-(5''-triphosphoribosyl)-3'-dephosphocoenzyme-A synthase</fullName>
        <shortName evidence="1">2-(5''-triphosphoribosyl)-3'-dephospho-CoA synthase</shortName>
        <ecNumber evidence="1">2.4.2.52</ecNumber>
    </recommendedName>
</protein>
<proteinExistence type="inferred from homology"/>
<accession>Q8P102</accession>
<organism>
    <name type="scientific">Streptococcus pyogenes serotype M18 (strain MGAS8232)</name>
    <dbReference type="NCBI Taxonomy" id="186103"/>
    <lineage>
        <taxon>Bacteria</taxon>
        <taxon>Bacillati</taxon>
        <taxon>Bacillota</taxon>
        <taxon>Bacilli</taxon>
        <taxon>Lactobacillales</taxon>
        <taxon>Streptococcaceae</taxon>
        <taxon>Streptococcus</taxon>
    </lineage>
</organism>
<reference key="1">
    <citation type="journal article" date="2002" name="Proc. Natl. Acad. Sci. U.S.A.">
        <title>Genome sequence and comparative microarray analysis of serotype M18 group A Streptococcus strains associated with acute rheumatic fever outbreaks.</title>
        <authorList>
            <person name="Smoot J.C."/>
            <person name="Barbian K.D."/>
            <person name="Van Gompel J.J."/>
            <person name="Smoot L.M."/>
            <person name="Chaussee M.S."/>
            <person name="Sylva G.L."/>
            <person name="Sturdevant D.E."/>
            <person name="Ricklefs S.M."/>
            <person name="Porcella S.F."/>
            <person name="Parkins L.D."/>
            <person name="Beres S.B."/>
            <person name="Campbell D.S."/>
            <person name="Smith T.M."/>
            <person name="Zhang Q."/>
            <person name="Kapur V."/>
            <person name="Daly J.A."/>
            <person name="Veasy L.G."/>
            <person name="Musser J.M."/>
        </authorList>
    </citation>
    <scope>NUCLEOTIDE SEQUENCE [LARGE SCALE GENOMIC DNA]</scope>
    <source>
        <strain>MGAS8232</strain>
    </source>
</reference>
<sequence>MTKAVLTSISQLALKALLYEVSLSPKPGLVDRFDNGAHDDMSFMTFIDSMIALSPFFQAYIETGFAYAKEEPLLLFNRLRQLGQKAEETMFCATQGINTHKGLNFSMALLLGATGAYLARTPHLMTDLGCFSKEDTLAICRLVKPMTAHLIQADLGHLNTKKEFTYGEQLFVTYGIKGPRGEASEGFTTLTNHALPYFRQMISQNDPETSQLRLLVYLMSIVEDGNLIHRGGIEAWKGVKADMRLLLQQDLSTTDLRLALSSYNQCLINQHLSPGGAADLLALTFYFAFLEKLL</sequence>
<name>CITG_STRP8</name>
<keyword id="KW-0067">ATP-binding</keyword>
<keyword id="KW-0547">Nucleotide-binding</keyword>
<keyword id="KW-0808">Transferase</keyword>
<comment type="catalytic activity">
    <reaction evidence="1">
        <text>3'-dephospho-CoA + ATP = 2'-(5''-triphospho-alpha-D-ribosyl)-3'-dephospho-CoA + adenine</text>
        <dbReference type="Rhea" id="RHEA:15117"/>
        <dbReference type="ChEBI" id="CHEBI:16708"/>
        <dbReference type="ChEBI" id="CHEBI:30616"/>
        <dbReference type="ChEBI" id="CHEBI:57328"/>
        <dbReference type="ChEBI" id="CHEBI:61378"/>
        <dbReference type="EC" id="2.4.2.52"/>
    </reaction>
</comment>
<comment type="similarity">
    <text evidence="1">Belongs to the CitG/MdcB family.</text>
</comment>
<gene>
    <name evidence="1" type="primary">citG</name>
    <name type="ordered locus">spyM18_1130</name>
</gene>
<dbReference type="EC" id="2.4.2.52" evidence="1"/>
<dbReference type="EMBL" id="AE009949">
    <property type="protein sequence ID" value="AAL97751.1"/>
    <property type="molecule type" value="Genomic_DNA"/>
</dbReference>
<dbReference type="RefSeq" id="WP_011017777.1">
    <property type="nucleotide sequence ID" value="NC_003485.1"/>
</dbReference>
<dbReference type="KEGG" id="spm:spyM18_1130"/>
<dbReference type="HOGENOM" id="CLU_056179_1_0_9"/>
<dbReference type="GO" id="GO:0005524">
    <property type="term" value="F:ATP binding"/>
    <property type="evidence" value="ECO:0007669"/>
    <property type="project" value="UniProtKB-KW"/>
</dbReference>
<dbReference type="GO" id="GO:0046917">
    <property type="term" value="F:triphosphoribosyl-dephospho-CoA synthase activity"/>
    <property type="evidence" value="ECO:0007669"/>
    <property type="project" value="UniProtKB-UniRule"/>
</dbReference>
<dbReference type="GO" id="GO:0051191">
    <property type="term" value="P:prosthetic group biosynthetic process"/>
    <property type="evidence" value="ECO:0007669"/>
    <property type="project" value="TreeGrafter"/>
</dbReference>
<dbReference type="Gene3D" id="1.10.4200.10">
    <property type="entry name" value="Triphosphoribosyl-dephospho-CoA protein"/>
    <property type="match status" value="1"/>
</dbReference>
<dbReference type="HAMAP" id="MF_00397">
    <property type="entry name" value="CitG"/>
    <property type="match status" value="1"/>
</dbReference>
<dbReference type="InterPro" id="IPR002736">
    <property type="entry name" value="CitG"/>
</dbReference>
<dbReference type="InterPro" id="IPR017551">
    <property type="entry name" value="TriPribosyl-deP-CoA_syn_CitG"/>
</dbReference>
<dbReference type="NCBIfam" id="TIGR03125">
    <property type="entry name" value="citrate_citG"/>
    <property type="match status" value="1"/>
</dbReference>
<dbReference type="PANTHER" id="PTHR30201:SF2">
    <property type="entry name" value="2-(5''-TRIPHOSPHORIBOSYL)-3'-DEPHOSPHOCOENZYME-A SYNTHASE"/>
    <property type="match status" value="1"/>
</dbReference>
<dbReference type="PANTHER" id="PTHR30201">
    <property type="entry name" value="TRIPHOSPHORIBOSYL-DEPHOSPHO-COA SYNTHASE"/>
    <property type="match status" value="1"/>
</dbReference>
<dbReference type="Pfam" id="PF01874">
    <property type="entry name" value="CitG"/>
    <property type="match status" value="1"/>
</dbReference>